<feature type="chain" id="PRO_1000137021" description="UPF0291 protein Teth514_0818">
    <location>
        <begin position="1"/>
        <end position="75"/>
    </location>
</feature>
<accession>B0K5C8</accession>
<reference key="1">
    <citation type="submission" date="2008-01" db="EMBL/GenBank/DDBJ databases">
        <title>Complete sequence of Thermoanaerobacter sp. X514.</title>
        <authorList>
            <consortium name="US DOE Joint Genome Institute"/>
            <person name="Copeland A."/>
            <person name="Lucas S."/>
            <person name="Lapidus A."/>
            <person name="Barry K."/>
            <person name="Glavina del Rio T."/>
            <person name="Dalin E."/>
            <person name="Tice H."/>
            <person name="Pitluck S."/>
            <person name="Bruce D."/>
            <person name="Goodwin L."/>
            <person name="Saunders E."/>
            <person name="Brettin T."/>
            <person name="Detter J.C."/>
            <person name="Han C."/>
            <person name="Schmutz J."/>
            <person name="Larimer F."/>
            <person name="Land M."/>
            <person name="Hauser L."/>
            <person name="Kyrpides N."/>
            <person name="Kim E."/>
            <person name="Hemme C."/>
            <person name="Fields M.W."/>
            <person name="He Z."/>
            <person name="Zhou J."/>
            <person name="Richardson P."/>
        </authorList>
    </citation>
    <scope>NUCLEOTIDE SEQUENCE [LARGE SCALE GENOMIC DNA]</scope>
    <source>
        <strain>X514</strain>
    </source>
</reference>
<comment type="subcellular location">
    <subcellularLocation>
        <location evidence="1">Cytoplasm</location>
    </subcellularLocation>
</comment>
<comment type="similarity">
    <text evidence="1">Belongs to the UPF0291 family.</text>
</comment>
<gene>
    <name type="ordered locus">Teth514_0818</name>
</gene>
<dbReference type="EMBL" id="CP000923">
    <property type="protein sequence ID" value="ABY92121.1"/>
    <property type="molecule type" value="Genomic_DNA"/>
</dbReference>
<dbReference type="RefSeq" id="WP_009052976.1">
    <property type="nucleotide sequence ID" value="NC_010320.1"/>
</dbReference>
<dbReference type="SMR" id="B0K5C8"/>
<dbReference type="KEGG" id="tex:Teth514_0818"/>
<dbReference type="HOGENOM" id="CLU_173137_2_0_9"/>
<dbReference type="Proteomes" id="UP000002155">
    <property type="component" value="Chromosome"/>
</dbReference>
<dbReference type="GO" id="GO:0005737">
    <property type="term" value="C:cytoplasm"/>
    <property type="evidence" value="ECO:0007669"/>
    <property type="project" value="UniProtKB-SubCell"/>
</dbReference>
<dbReference type="Gene3D" id="1.10.287.540">
    <property type="entry name" value="Helix hairpin bin"/>
    <property type="match status" value="1"/>
</dbReference>
<dbReference type="HAMAP" id="MF_01103">
    <property type="entry name" value="UPF0291"/>
    <property type="match status" value="1"/>
</dbReference>
<dbReference type="InterPro" id="IPR009242">
    <property type="entry name" value="DUF896"/>
</dbReference>
<dbReference type="PANTHER" id="PTHR37300">
    <property type="entry name" value="UPF0291 PROTEIN CBO2609/CLC_2481"/>
    <property type="match status" value="1"/>
</dbReference>
<dbReference type="PANTHER" id="PTHR37300:SF1">
    <property type="entry name" value="UPF0291 PROTEIN YNZC"/>
    <property type="match status" value="1"/>
</dbReference>
<dbReference type="Pfam" id="PF05979">
    <property type="entry name" value="DUF896"/>
    <property type="match status" value="1"/>
</dbReference>
<dbReference type="SUPFAM" id="SSF158221">
    <property type="entry name" value="YnzC-like"/>
    <property type="match status" value="1"/>
</dbReference>
<proteinExistence type="inferred from homology"/>
<evidence type="ECO:0000255" key="1">
    <source>
        <dbReference type="HAMAP-Rule" id="MF_01103"/>
    </source>
</evidence>
<sequence length="75" mass="9389">MITREMIDRINFLYHKSQTEGLTEEEKEEQKRLRQEYVKEIKERVRRELESIKYANNSCEHCGHDHHHHHHHHRH</sequence>
<name>Y818_THEPX</name>
<protein>
    <recommendedName>
        <fullName evidence="1">UPF0291 protein Teth514_0818</fullName>
    </recommendedName>
</protein>
<organism>
    <name type="scientific">Thermoanaerobacter sp. (strain X514)</name>
    <dbReference type="NCBI Taxonomy" id="399726"/>
    <lineage>
        <taxon>Bacteria</taxon>
        <taxon>Bacillati</taxon>
        <taxon>Bacillota</taxon>
        <taxon>Clostridia</taxon>
        <taxon>Thermoanaerobacterales</taxon>
        <taxon>Thermoanaerobacteraceae</taxon>
        <taxon>Thermoanaerobacter</taxon>
    </lineage>
</organism>
<keyword id="KW-0963">Cytoplasm</keyword>